<proteinExistence type="inferred from homology"/>
<feature type="initiator methionine" description="Removed" evidence="1">
    <location>
        <position position="1"/>
    </location>
</feature>
<feature type="chain" id="PRO_0000135355" description="Glutamine--fructose-6-phosphate aminotransferase [isomerizing]">
    <location>
        <begin position="2"/>
        <end position="624"/>
    </location>
</feature>
<feature type="domain" description="Glutamine amidotransferase type-2" evidence="1">
    <location>
        <begin position="2"/>
        <end position="226"/>
    </location>
</feature>
<feature type="domain" description="SIS 1" evidence="1">
    <location>
        <begin position="297"/>
        <end position="436"/>
    </location>
</feature>
<feature type="domain" description="SIS 2" evidence="1">
    <location>
        <begin position="469"/>
        <end position="614"/>
    </location>
</feature>
<feature type="active site" description="Nucleophile; for GATase activity" evidence="1">
    <location>
        <position position="2"/>
    </location>
</feature>
<feature type="active site" description="For Fru-6P isomerization activity" evidence="1">
    <location>
        <position position="619"/>
    </location>
</feature>
<sequence length="624" mass="67199">MCGIVGYVGQQPACAVVMAALRRMEYRGYDSSGVALVNGDGTLTVSRRAGRLANLEEAVAQLPPSALTGTTGLGHTRWATHGRPTDRNAHPHRDAAGKIAVVHNGIIENYAGLRHELEADGVEFASDTDTEVAVHLVAQAYRHGPTAGDFAASVLAVLRRLDGHFTLVFANADEPGTIVAARRSTPLVIGIGDGEMFVGSDVAAFIPHTRNAIELGQDQAVVLTADGYRITDFDGNDDLGPGAYREFHIDWDLAAAEKGGYEYFMLKEIAEQPAAVADTLLGHFVDGRIVLDEQRLSDQELREVDKVFVVACGTAYHSGLLAKYAIEHWTRLPVEVELASEFRYRDPVLDRSTLVVAISQSGETADTLEAVRHAKEQKAKVLAICNTNGSQIPRECDAVLYTRAGPEIGVASTKTFLAQITANYLVGLALAQARGTKYPDEVEREYHELEAMPDLVARVLATIKPVAALAQRFAQSPTVLFLGRHVGYPVALEGALKLKELAYMHAEGFAAGELKHGPIALIEDDLPVIVIMPSPKGSAVLHAKLLSNIREIQARGAITIVIAEEGDDTVRPYADHLIEIPSVSTLLQPLLSTIPLQVFAASVAQARGYDVDKPRNLAKSVTVE</sequence>
<evidence type="ECO:0000255" key="1">
    <source>
        <dbReference type="HAMAP-Rule" id="MF_00164"/>
    </source>
</evidence>
<gene>
    <name evidence="1" type="primary">glmS</name>
    <name type="ordered locus">MAP_4253</name>
</gene>
<keyword id="KW-0032">Aminotransferase</keyword>
<keyword id="KW-0963">Cytoplasm</keyword>
<keyword id="KW-0315">Glutamine amidotransferase</keyword>
<keyword id="KW-1185">Reference proteome</keyword>
<keyword id="KW-0677">Repeat</keyword>
<keyword id="KW-0808">Transferase</keyword>
<accession>Q73S23</accession>
<organism>
    <name type="scientific">Mycolicibacterium paratuberculosis (strain ATCC BAA-968 / K-10)</name>
    <name type="common">Mycobacterium paratuberculosis</name>
    <dbReference type="NCBI Taxonomy" id="262316"/>
    <lineage>
        <taxon>Bacteria</taxon>
        <taxon>Bacillati</taxon>
        <taxon>Actinomycetota</taxon>
        <taxon>Actinomycetes</taxon>
        <taxon>Mycobacteriales</taxon>
        <taxon>Mycobacteriaceae</taxon>
        <taxon>Mycobacterium</taxon>
        <taxon>Mycobacterium avium complex (MAC)</taxon>
    </lineage>
</organism>
<name>GLMS_MYCPA</name>
<comment type="function">
    <text evidence="1">Catalyzes the first step in hexosamine metabolism, converting fructose-6P into glucosamine-6P using glutamine as a nitrogen source.</text>
</comment>
<comment type="catalytic activity">
    <reaction evidence="1">
        <text>D-fructose 6-phosphate + L-glutamine = D-glucosamine 6-phosphate + L-glutamate</text>
        <dbReference type="Rhea" id="RHEA:13237"/>
        <dbReference type="ChEBI" id="CHEBI:29985"/>
        <dbReference type="ChEBI" id="CHEBI:58359"/>
        <dbReference type="ChEBI" id="CHEBI:58725"/>
        <dbReference type="ChEBI" id="CHEBI:61527"/>
        <dbReference type="EC" id="2.6.1.16"/>
    </reaction>
</comment>
<comment type="subunit">
    <text evidence="1">Homodimer.</text>
</comment>
<comment type="subcellular location">
    <subcellularLocation>
        <location evidence="1">Cytoplasm</location>
    </subcellularLocation>
</comment>
<protein>
    <recommendedName>
        <fullName evidence="1">Glutamine--fructose-6-phosphate aminotransferase [isomerizing]</fullName>
        <ecNumber evidence="1">2.6.1.16</ecNumber>
    </recommendedName>
    <alternativeName>
        <fullName evidence="1">D-fructose-6-phosphate amidotransferase</fullName>
    </alternativeName>
    <alternativeName>
        <fullName evidence="1">GFAT</fullName>
    </alternativeName>
    <alternativeName>
        <fullName evidence="1">Glucosamine-6-phosphate synthase</fullName>
    </alternativeName>
    <alternativeName>
        <fullName evidence="1">Hexosephosphate aminotransferase</fullName>
    </alternativeName>
    <alternativeName>
        <fullName evidence="1">L-glutamine--D-fructose-6-phosphate amidotransferase</fullName>
    </alternativeName>
</protein>
<reference key="1">
    <citation type="journal article" date="2005" name="Proc. Natl. Acad. Sci. U.S.A.">
        <title>The complete genome sequence of Mycobacterium avium subspecies paratuberculosis.</title>
        <authorList>
            <person name="Li L."/>
            <person name="Bannantine J.P."/>
            <person name="Zhang Q."/>
            <person name="Amonsin A."/>
            <person name="May B.J."/>
            <person name="Alt D."/>
            <person name="Banerji N."/>
            <person name="Kanjilal S."/>
            <person name="Kapur V."/>
        </authorList>
    </citation>
    <scope>NUCLEOTIDE SEQUENCE [LARGE SCALE GENOMIC DNA]</scope>
    <source>
        <strain>ATCC BAA-968 / K-10</strain>
    </source>
</reference>
<dbReference type="EC" id="2.6.1.16" evidence="1"/>
<dbReference type="EMBL" id="AE016958">
    <property type="protein sequence ID" value="AAS06803.1"/>
    <property type="molecule type" value="Genomic_DNA"/>
</dbReference>
<dbReference type="RefSeq" id="WP_003879511.1">
    <property type="nucleotide sequence ID" value="NZ_CP106873.1"/>
</dbReference>
<dbReference type="SMR" id="Q73S23"/>
<dbReference type="STRING" id="262316.MAP_4253"/>
<dbReference type="GeneID" id="75271891"/>
<dbReference type="KEGG" id="mpa:MAP_4253"/>
<dbReference type="eggNOG" id="COG0449">
    <property type="taxonomic scope" value="Bacteria"/>
</dbReference>
<dbReference type="HOGENOM" id="CLU_012520_5_2_11"/>
<dbReference type="Proteomes" id="UP000000580">
    <property type="component" value="Chromosome"/>
</dbReference>
<dbReference type="GO" id="GO:0005829">
    <property type="term" value="C:cytosol"/>
    <property type="evidence" value="ECO:0007669"/>
    <property type="project" value="TreeGrafter"/>
</dbReference>
<dbReference type="GO" id="GO:0097367">
    <property type="term" value="F:carbohydrate derivative binding"/>
    <property type="evidence" value="ECO:0007669"/>
    <property type="project" value="InterPro"/>
</dbReference>
<dbReference type="GO" id="GO:0004360">
    <property type="term" value="F:glutamine-fructose-6-phosphate transaminase (isomerizing) activity"/>
    <property type="evidence" value="ECO:0007669"/>
    <property type="project" value="UniProtKB-UniRule"/>
</dbReference>
<dbReference type="GO" id="GO:0005975">
    <property type="term" value="P:carbohydrate metabolic process"/>
    <property type="evidence" value="ECO:0007669"/>
    <property type="project" value="UniProtKB-UniRule"/>
</dbReference>
<dbReference type="GO" id="GO:0006002">
    <property type="term" value="P:fructose 6-phosphate metabolic process"/>
    <property type="evidence" value="ECO:0007669"/>
    <property type="project" value="TreeGrafter"/>
</dbReference>
<dbReference type="GO" id="GO:0006487">
    <property type="term" value="P:protein N-linked glycosylation"/>
    <property type="evidence" value="ECO:0007669"/>
    <property type="project" value="TreeGrafter"/>
</dbReference>
<dbReference type="GO" id="GO:0006047">
    <property type="term" value="P:UDP-N-acetylglucosamine metabolic process"/>
    <property type="evidence" value="ECO:0007669"/>
    <property type="project" value="TreeGrafter"/>
</dbReference>
<dbReference type="CDD" id="cd00714">
    <property type="entry name" value="GFAT"/>
    <property type="match status" value="1"/>
</dbReference>
<dbReference type="CDD" id="cd05008">
    <property type="entry name" value="SIS_GlmS_GlmD_1"/>
    <property type="match status" value="1"/>
</dbReference>
<dbReference type="CDD" id="cd05009">
    <property type="entry name" value="SIS_GlmS_GlmD_2"/>
    <property type="match status" value="1"/>
</dbReference>
<dbReference type="FunFam" id="3.40.50.10490:FF:000001">
    <property type="entry name" value="Glutamine--fructose-6-phosphate aminotransferase [isomerizing]"/>
    <property type="match status" value="1"/>
</dbReference>
<dbReference type="FunFam" id="3.40.50.10490:FF:000019">
    <property type="entry name" value="Glutamine--fructose-6-phosphate aminotransferase [isomerizing]"/>
    <property type="match status" value="1"/>
</dbReference>
<dbReference type="FunFam" id="3.60.20.10:FF:000006">
    <property type="entry name" value="Glutamine--fructose-6-phosphate aminotransferase [isomerizing]"/>
    <property type="match status" value="1"/>
</dbReference>
<dbReference type="Gene3D" id="3.40.50.10490">
    <property type="entry name" value="Glucose-6-phosphate isomerase like protein, domain 1"/>
    <property type="match status" value="2"/>
</dbReference>
<dbReference type="Gene3D" id="3.60.20.10">
    <property type="entry name" value="Glutamine Phosphoribosylpyrophosphate, subunit 1, domain 1"/>
    <property type="match status" value="1"/>
</dbReference>
<dbReference type="HAMAP" id="MF_00164">
    <property type="entry name" value="GlmS"/>
    <property type="match status" value="1"/>
</dbReference>
<dbReference type="InterPro" id="IPR017932">
    <property type="entry name" value="GATase_2_dom"/>
</dbReference>
<dbReference type="InterPro" id="IPR005855">
    <property type="entry name" value="GFAT"/>
</dbReference>
<dbReference type="InterPro" id="IPR047084">
    <property type="entry name" value="GFAT_N"/>
</dbReference>
<dbReference type="InterPro" id="IPR035466">
    <property type="entry name" value="GlmS/AgaS_SIS"/>
</dbReference>
<dbReference type="InterPro" id="IPR035490">
    <property type="entry name" value="GlmS/FrlB_SIS"/>
</dbReference>
<dbReference type="InterPro" id="IPR029055">
    <property type="entry name" value="Ntn_hydrolases_N"/>
</dbReference>
<dbReference type="InterPro" id="IPR001347">
    <property type="entry name" value="SIS_dom"/>
</dbReference>
<dbReference type="InterPro" id="IPR046348">
    <property type="entry name" value="SIS_dom_sf"/>
</dbReference>
<dbReference type="NCBIfam" id="TIGR01135">
    <property type="entry name" value="glmS"/>
    <property type="match status" value="1"/>
</dbReference>
<dbReference type="NCBIfam" id="NF001484">
    <property type="entry name" value="PRK00331.1"/>
    <property type="match status" value="1"/>
</dbReference>
<dbReference type="PANTHER" id="PTHR10937">
    <property type="entry name" value="GLUCOSAMINE--FRUCTOSE-6-PHOSPHATE AMINOTRANSFERASE, ISOMERIZING"/>
    <property type="match status" value="1"/>
</dbReference>
<dbReference type="PANTHER" id="PTHR10937:SF0">
    <property type="entry name" value="GLUTAMINE--FRUCTOSE-6-PHOSPHATE TRANSAMINASE (ISOMERIZING)"/>
    <property type="match status" value="1"/>
</dbReference>
<dbReference type="Pfam" id="PF13522">
    <property type="entry name" value="GATase_6"/>
    <property type="match status" value="1"/>
</dbReference>
<dbReference type="Pfam" id="PF01380">
    <property type="entry name" value="SIS"/>
    <property type="match status" value="2"/>
</dbReference>
<dbReference type="SUPFAM" id="SSF56235">
    <property type="entry name" value="N-terminal nucleophile aminohydrolases (Ntn hydrolases)"/>
    <property type="match status" value="1"/>
</dbReference>
<dbReference type="SUPFAM" id="SSF53697">
    <property type="entry name" value="SIS domain"/>
    <property type="match status" value="1"/>
</dbReference>
<dbReference type="PROSITE" id="PS51278">
    <property type="entry name" value="GATASE_TYPE_2"/>
    <property type="match status" value="1"/>
</dbReference>
<dbReference type="PROSITE" id="PS51464">
    <property type="entry name" value="SIS"/>
    <property type="match status" value="2"/>
</dbReference>